<keyword id="KW-0217">Developmental protein</keyword>
<keyword id="KW-0221">Differentiation</keyword>
<keyword id="KW-0238">DNA-binding</keyword>
<keyword id="KW-0287">Flowering</keyword>
<keyword id="KW-0539">Nucleus</keyword>
<keyword id="KW-1185">Reference proteome</keyword>
<keyword id="KW-0804">Transcription</keyword>
<keyword id="KW-0805">Transcription regulation</keyword>
<evidence type="ECO:0000255" key="1">
    <source>
        <dbReference type="PROSITE-ProRule" id="PRU00251"/>
    </source>
</evidence>
<evidence type="ECO:0000255" key="2">
    <source>
        <dbReference type="PROSITE-ProRule" id="PRU00629"/>
    </source>
</evidence>
<evidence type="ECO:0000256" key="3">
    <source>
        <dbReference type="SAM" id="MobiDB-lite"/>
    </source>
</evidence>
<evidence type="ECO:0000269" key="4">
    <source>
    </source>
</evidence>
<evidence type="ECO:0000269" key="5">
    <source>
    </source>
</evidence>
<evidence type="ECO:0000305" key="6"/>
<evidence type="ECO:0000312" key="7">
    <source>
        <dbReference type="EMBL" id="EEE57847.1"/>
    </source>
</evidence>
<name>MAD22_ORYSJ</name>
<comment type="function">
    <text evidence="4 5">Probable transcription factor. May be required for spikelet (rice flower) development (PubMed:15682279). Transcription factor that functions to support the MADS55 in its function as negative regulator of brassinosteroid signaling (PubMed:18182025).</text>
</comment>
<comment type="subcellular location">
    <subcellularLocation>
        <location evidence="6">Nucleus</location>
    </subcellularLocation>
</comment>
<comment type="tissue specificity">
    <text evidence="4 5">Expressed in palea and stamen primordia (PubMed:15682279). Expressed in shoots and coleoptiles (PubMed:18182025).</text>
</comment>
<comment type="developmental stage">
    <text evidence="4">Expressed in the L1 cell layer of the embryo 2 days after pollination.</text>
</comment>
<comment type="disruption phenotype">
    <text evidence="5">No visible phenotype under normal growth conditions.</text>
</comment>
<comment type="miscellaneous">
    <text evidence="5">Plants over-expressing MADS22 produce shortened panicles and stems.</text>
</comment>
<feature type="chain" id="PRO_0000229904" description="MADS-box transcription factor 22">
    <location>
        <begin position="1"/>
        <end position="228"/>
    </location>
</feature>
<feature type="domain" description="MADS-box" evidence="1">
    <location>
        <begin position="1"/>
        <end position="61"/>
    </location>
</feature>
<feature type="domain" description="K-box" evidence="2">
    <location>
        <begin position="86"/>
        <end position="176"/>
    </location>
</feature>
<feature type="region of interest" description="Disordered" evidence="3">
    <location>
        <begin position="189"/>
        <end position="217"/>
    </location>
</feature>
<sequence>MARERREIKRIESAAARQVTFSKRRRGLFKKAEELSVLCDADVALIVFSSTGKLSHFASSSMNEIIDKYNTHSNNLGKAEQPSLDLNLEHSKYAHLNEQLAEASLRLRQMRGEELEGLSIDELQQLEKNLEAGLHRVMLTKDQQFMEQISELQRKSSQLAEENMQLRNQVSQISPAEKQVVDTENFVTEGQSSESVMTALHSGSSQSQDNDDGSDVSLKLGLPCGAWK</sequence>
<accession>Q9XJ66</accession>
<accession>D3U2H0</accession>
<accession>Q0DXD1</accession>
<organism>
    <name type="scientific">Oryza sativa subsp. japonica</name>
    <name type="common">Rice</name>
    <dbReference type="NCBI Taxonomy" id="39947"/>
    <lineage>
        <taxon>Eukaryota</taxon>
        <taxon>Viridiplantae</taxon>
        <taxon>Streptophyta</taxon>
        <taxon>Embryophyta</taxon>
        <taxon>Tracheophyta</taxon>
        <taxon>Spermatophyta</taxon>
        <taxon>Magnoliopsida</taxon>
        <taxon>Liliopsida</taxon>
        <taxon>Poales</taxon>
        <taxon>Poaceae</taxon>
        <taxon>BOP clade</taxon>
        <taxon>Oryzoideae</taxon>
        <taxon>Oryzeae</taxon>
        <taxon>Oryzinae</taxon>
        <taxon>Oryza</taxon>
        <taxon>Oryza sativa</taxon>
    </lineage>
</organism>
<protein>
    <recommendedName>
        <fullName>MADS-box transcription factor 22</fullName>
    </recommendedName>
    <alternativeName>
        <fullName>OsMADS22</fullName>
    </alternativeName>
</protein>
<proteinExistence type="evidence at transcript level"/>
<dbReference type="EMBL" id="AB003322">
    <property type="protein sequence ID" value="BAA81880.1"/>
    <property type="molecule type" value="mRNA"/>
</dbReference>
<dbReference type="EMBL" id="AB107957">
    <property type="protein sequence ID" value="BAD93335.1"/>
    <property type="molecule type" value="mRNA"/>
</dbReference>
<dbReference type="EMBL" id="FJ750938">
    <property type="protein sequence ID" value="ACY26068.1"/>
    <property type="molecule type" value="mRNA"/>
</dbReference>
<dbReference type="EMBL" id="AP004159">
    <property type="protein sequence ID" value="BAD19410.1"/>
    <property type="molecule type" value="Genomic_DNA"/>
</dbReference>
<dbReference type="EMBL" id="AP008208">
    <property type="protein sequence ID" value="BAF10107.1"/>
    <property type="molecule type" value="Genomic_DNA"/>
</dbReference>
<dbReference type="EMBL" id="AP014958">
    <property type="protein sequence ID" value="BAS81031.1"/>
    <property type="molecule type" value="Genomic_DNA"/>
</dbReference>
<dbReference type="EMBL" id="CM000139">
    <property type="protein sequence ID" value="EEE57847.1"/>
    <property type="molecule type" value="Genomic_DNA"/>
</dbReference>
<dbReference type="RefSeq" id="XP_015624915.1">
    <property type="nucleotide sequence ID" value="XM_015769429.1"/>
</dbReference>
<dbReference type="SMR" id="Q9XJ66"/>
<dbReference type="FunCoup" id="Q9XJ66">
    <property type="interactions" value="45"/>
</dbReference>
<dbReference type="IntAct" id="Q9XJ66">
    <property type="interactions" value="2"/>
</dbReference>
<dbReference type="STRING" id="39947.Q9XJ66"/>
<dbReference type="PaxDb" id="39947-Q9XJ66"/>
<dbReference type="EnsemblPlants" id="Os02t0761000-01">
    <property type="protein sequence ID" value="Os02t0761000-01"/>
    <property type="gene ID" value="Os02g0761000"/>
</dbReference>
<dbReference type="Gramene" id="Os02t0761000-01">
    <property type="protein sequence ID" value="Os02t0761000-01"/>
    <property type="gene ID" value="Os02g0761000"/>
</dbReference>
<dbReference type="KEGG" id="dosa:Os02g0761000"/>
<dbReference type="eggNOG" id="KOG0014">
    <property type="taxonomic scope" value="Eukaryota"/>
</dbReference>
<dbReference type="HOGENOM" id="CLU_053053_14_1_1"/>
<dbReference type="InParanoid" id="Q9XJ66"/>
<dbReference type="OMA" id="MMAREKI"/>
<dbReference type="OrthoDB" id="1898716at2759"/>
<dbReference type="Proteomes" id="UP000000763">
    <property type="component" value="Chromosome 2"/>
</dbReference>
<dbReference type="Proteomes" id="UP000007752">
    <property type="component" value="Chromosome 2"/>
</dbReference>
<dbReference type="Proteomes" id="UP000059680">
    <property type="component" value="Chromosome 2"/>
</dbReference>
<dbReference type="GO" id="GO:0005634">
    <property type="term" value="C:nucleus"/>
    <property type="evidence" value="ECO:0007669"/>
    <property type="project" value="UniProtKB-SubCell"/>
</dbReference>
<dbReference type="GO" id="GO:0000981">
    <property type="term" value="F:DNA-binding transcription factor activity, RNA polymerase II-specific"/>
    <property type="evidence" value="ECO:0000318"/>
    <property type="project" value="GO_Central"/>
</dbReference>
<dbReference type="GO" id="GO:0046983">
    <property type="term" value="F:protein dimerization activity"/>
    <property type="evidence" value="ECO:0007669"/>
    <property type="project" value="InterPro"/>
</dbReference>
<dbReference type="GO" id="GO:0000978">
    <property type="term" value="F:RNA polymerase II cis-regulatory region sequence-specific DNA binding"/>
    <property type="evidence" value="ECO:0000318"/>
    <property type="project" value="GO_Central"/>
</dbReference>
<dbReference type="GO" id="GO:0030154">
    <property type="term" value="P:cell differentiation"/>
    <property type="evidence" value="ECO:0000315"/>
    <property type="project" value="Gramene"/>
</dbReference>
<dbReference type="GO" id="GO:0009908">
    <property type="term" value="P:flower development"/>
    <property type="evidence" value="ECO:0000315"/>
    <property type="project" value="Gramene"/>
</dbReference>
<dbReference type="GO" id="GO:1900458">
    <property type="term" value="P:negative regulation of brassinosteroid mediated signaling pathway"/>
    <property type="evidence" value="ECO:0000315"/>
    <property type="project" value="UniProtKB"/>
</dbReference>
<dbReference type="GO" id="GO:0045944">
    <property type="term" value="P:positive regulation of transcription by RNA polymerase II"/>
    <property type="evidence" value="ECO:0007669"/>
    <property type="project" value="InterPro"/>
</dbReference>
<dbReference type="GO" id="GO:0006357">
    <property type="term" value="P:regulation of transcription by RNA polymerase II"/>
    <property type="evidence" value="ECO:0000318"/>
    <property type="project" value="GO_Central"/>
</dbReference>
<dbReference type="CDD" id="cd00265">
    <property type="entry name" value="MADS_MEF2_like"/>
    <property type="match status" value="1"/>
</dbReference>
<dbReference type="FunFam" id="3.40.1810.10:FF:000007">
    <property type="entry name" value="Transcription factor, MADS-box"/>
    <property type="match status" value="1"/>
</dbReference>
<dbReference type="Gene3D" id="3.40.1810.10">
    <property type="entry name" value="Transcription factor, MADS-box"/>
    <property type="match status" value="1"/>
</dbReference>
<dbReference type="InterPro" id="IPR050142">
    <property type="entry name" value="MADS-box/MEF2_TF"/>
</dbReference>
<dbReference type="InterPro" id="IPR033896">
    <property type="entry name" value="MEF2-like_N"/>
</dbReference>
<dbReference type="InterPro" id="IPR002487">
    <property type="entry name" value="TF_Kbox"/>
</dbReference>
<dbReference type="InterPro" id="IPR002100">
    <property type="entry name" value="TF_MADSbox"/>
</dbReference>
<dbReference type="InterPro" id="IPR036879">
    <property type="entry name" value="TF_MADSbox_sf"/>
</dbReference>
<dbReference type="PANTHER" id="PTHR48019">
    <property type="entry name" value="SERUM RESPONSE FACTOR HOMOLOG"/>
    <property type="match status" value="1"/>
</dbReference>
<dbReference type="Pfam" id="PF01486">
    <property type="entry name" value="K-box"/>
    <property type="match status" value="1"/>
</dbReference>
<dbReference type="Pfam" id="PF00319">
    <property type="entry name" value="SRF-TF"/>
    <property type="match status" value="1"/>
</dbReference>
<dbReference type="PRINTS" id="PR00404">
    <property type="entry name" value="MADSDOMAIN"/>
</dbReference>
<dbReference type="SMART" id="SM00432">
    <property type="entry name" value="MADS"/>
    <property type="match status" value="1"/>
</dbReference>
<dbReference type="SUPFAM" id="SSF55455">
    <property type="entry name" value="SRF-like"/>
    <property type="match status" value="1"/>
</dbReference>
<dbReference type="PROSITE" id="PS51297">
    <property type="entry name" value="K_BOX"/>
    <property type="match status" value="1"/>
</dbReference>
<dbReference type="PROSITE" id="PS00350">
    <property type="entry name" value="MADS_BOX_1"/>
    <property type="match status" value="1"/>
</dbReference>
<dbReference type="PROSITE" id="PS50066">
    <property type="entry name" value="MADS_BOX_2"/>
    <property type="match status" value="1"/>
</dbReference>
<gene>
    <name type="primary">MADS22</name>
    <name type="synonym">RMD1</name>
    <name type="ordered locus">Os02g0761000</name>
    <name type="ordered locus">LOC_Os02g52340</name>
    <name type="ORF">OJ1175_B01.24</name>
    <name evidence="7" type="ORF">OsJ_08471</name>
</gene>
<reference key="1">
    <citation type="journal article" date="1999" name="DNA Res.">
        <title>Isolation and characterization of rice MADS box gene homologues and their RFLP mapping.</title>
        <authorList>
            <person name="Shinozuka Y."/>
            <person name="Kojima S."/>
            <person name="Shomura A."/>
            <person name="Ichimura H."/>
            <person name="Yano M."/>
            <person name="Yamamoto K."/>
            <person name="Sasaki T."/>
        </authorList>
    </citation>
    <scope>NUCLEOTIDE SEQUENCE [MRNA]</scope>
    <source>
        <strain>cv. Nipponbare</strain>
    </source>
</reference>
<reference key="2">
    <citation type="journal article" date="2005" name="Mol. Genet. Genomics">
        <title>OsMADS22, an STMADS11-like MADS-box gene of rice, is expressed in non-vegetative tissues and its ectopic expression induces spikelet meristem indeterminacy.</title>
        <authorList>
            <person name="Sentoku N."/>
            <person name="Kato H."/>
            <person name="Kitano H."/>
            <person name="Imai R."/>
        </authorList>
    </citation>
    <scope>NUCLEOTIDE SEQUENCE [MRNA]</scope>
    <scope>FUNCTION</scope>
    <scope>TISSUE SPECIFICITY</scope>
    <scope>DEVELOPMENTAL STAGE</scope>
    <source>
        <strain>cv. Yukihikari</strain>
    </source>
</reference>
<reference key="3">
    <citation type="submission" date="2009-02" db="EMBL/GenBank/DDBJ databases">
        <title>Molecular cloning of MADS-box transcription factor 22 gene in rice.</title>
        <authorList>
            <person name="Yoon U.H."/>
            <person name="Kim Y.H."/>
        </authorList>
    </citation>
    <scope>NUCLEOTIDE SEQUENCE [MRNA]</scope>
</reference>
<reference key="4">
    <citation type="journal article" date="2005" name="Nature">
        <title>The map-based sequence of the rice genome.</title>
        <authorList>
            <consortium name="International rice genome sequencing project (IRGSP)"/>
        </authorList>
    </citation>
    <scope>NUCLEOTIDE SEQUENCE [LARGE SCALE GENOMIC DNA]</scope>
    <source>
        <strain>cv. Nipponbare</strain>
    </source>
</reference>
<reference key="5">
    <citation type="journal article" date="2008" name="Nucleic Acids Res.">
        <title>The rice annotation project database (RAP-DB): 2008 update.</title>
        <authorList>
            <consortium name="The rice annotation project (RAP)"/>
        </authorList>
    </citation>
    <scope>GENOME REANNOTATION</scope>
    <source>
        <strain>cv. Nipponbare</strain>
    </source>
</reference>
<reference key="6">
    <citation type="journal article" date="2013" name="Rice">
        <title>Improvement of the Oryza sativa Nipponbare reference genome using next generation sequence and optical map data.</title>
        <authorList>
            <person name="Kawahara Y."/>
            <person name="de la Bastide M."/>
            <person name="Hamilton J.P."/>
            <person name="Kanamori H."/>
            <person name="McCombie W.R."/>
            <person name="Ouyang S."/>
            <person name="Schwartz D.C."/>
            <person name="Tanaka T."/>
            <person name="Wu J."/>
            <person name="Zhou S."/>
            <person name="Childs K.L."/>
            <person name="Davidson R.M."/>
            <person name="Lin H."/>
            <person name="Quesada-Ocampo L."/>
            <person name="Vaillancourt B."/>
            <person name="Sakai H."/>
            <person name="Lee S.S."/>
            <person name="Kim J."/>
            <person name="Numa H."/>
            <person name="Itoh T."/>
            <person name="Buell C.R."/>
            <person name="Matsumoto T."/>
        </authorList>
    </citation>
    <scope>GENOME REANNOTATION</scope>
    <source>
        <strain>cv. Nipponbare</strain>
    </source>
</reference>
<reference key="7">
    <citation type="journal article" date="2005" name="PLoS Biol.">
        <title>The genomes of Oryza sativa: a history of duplications.</title>
        <authorList>
            <person name="Yu J."/>
            <person name="Wang J."/>
            <person name="Lin W."/>
            <person name="Li S."/>
            <person name="Li H."/>
            <person name="Zhou J."/>
            <person name="Ni P."/>
            <person name="Dong W."/>
            <person name="Hu S."/>
            <person name="Zeng C."/>
            <person name="Zhang J."/>
            <person name="Zhang Y."/>
            <person name="Li R."/>
            <person name="Xu Z."/>
            <person name="Li S."/>
            <person name="Li X."/>
            <person name="Zheng H."/>
            <person name="Cong L."/>
            <person name="Lin L."/>
            <person name="Yin J."/>
            <person name="Geng J."/>
            <person name="Li G."/>
            <person name="Shi J."/>
            <person name="Liu J."/>
            <person name="Lv H."/>
            <person name="Li J."/>
            <person name="Wang J."/>
            <person name="Deng Y."/>
            <person name="Ran L."/>
            <person name="Shi X."/>
            <person name="Wang X."/>
            <person name="Wu Q."/>
            <person name="Li C."/>
            <person name="Ren X."/>
            <person name="Wang J."/>
            <person name="Wang X."/>
            <person name="Li D."/>
            <person name="Liu D."/>
            <person name="Zhang X."/>
            <person name="Ji Z."/>
            <person name="Zhao W."/>
            <person name="Sun Y."/>
            <person name="Zhang Z."/>
            <person name="Bao J."/>
            <person name="Han Y."/>
            <person name="Dong L."/>
            <person name="Ji J."/>
            <person name="Chen P."/>
            <person name="Wu S."/>
            <person name="Liu J."/>
            <person name="Xiao Y."/>
            <person name="Bu D."/>
            <person name="Tan J."/>
            <person name="Yang L."/>
            <person name="Ye C."/>
            <person name="Zhang J."/>
            <person name="Xu J."/>
            <person name="Zhou Y."/>
            <person name="Yu Y."/>
            <person name="Zhang B."/>
            <person name="Zhuang S."/>
            <person name="Wei H."/>
            <person name="Liu B."/>
            <person name="Lei M."/>
            <person name="Yu H."/>
            <person name="Li Y."/>
            <person name="Xu H."/>
            <person name="Wei S."/>
            <person name="He X."/>
            <person name="Fang L."/>
            <person name="Zhang Z."/>
            <person name="Zhang Y."/>
            <person name="Huang X."/>
            <person name="Su Z."/>
            <person name="Tong W."/>
            <person name="Li J."/>
            <person name="Tong Z."/>
            <person name="Li S."/>
            <person name="Ye J."/>
            <person name="Wang L."/>
            <person name="Fang L."/>
            <person name="Lei T."/>
            <person name="Chen C.-S."/>
            <person name="Chen H.-C."/>
            <person name="Xu Z."/>
            <person name="Li H."/>
            <person name="Huang H."/>
            <person name="Zhang F."/>
            <person name="Xu H."/>
            <person name="Li N."/>
            <person name="Zhao C."/>
            <person name="Li S."/>
            <person name="Dong L."/>
            <person name="Huang Y."/>
            <person name="Li L."/>
            <person name="Xi Y."/>
            <person name="Qi Q."/>
            <person name="Li W."/>
            <person name="Zhang B."/>
            <person name="Hu W."/>
            <person name="Zhang Y."/>
            <person name="Tian X."/>
            <person name="Jiao Y."/>
            <person name="Liang X."/>
            <person name="Jin J."/>
            <person name="Gao L."/>
            <person name="Zheng W."/>
            <person name="Hao B."/>
            <person name="Liu S.-M."/>
            <person name="Wang W."/>
            <person name="Yuan L."/>
            <person name="Cao M."/>
            <person name="McDermott J."/>
            <person name="Samudrala R."/>
            <person name="Wang J."/>
            <person name="Wong G.K.-S."/>
            <person name="Yang H."/>
        </authorList>
    </citation>
    <scope>NUCLEOTIDE SEQUENCE [LARGE SCALE GENOMIC DNA]</scope>
    <source>
        <strain>cv. Nipponbare</strain>
    </source>
</reference>
<reference key="8">
    <citation type="journal article" date="2008" name="Plant J.">
        <title>Rice SVP-group MADS-box proteins, OsMADS22 and OsMADS55, are negative regulators of brassinosteroid responses.</title>
        <authorList>
            <person name="Lee S."/>
            <person name="Choi S.C."/>
            <person name="An G."/>
        </authorList>
    </citation>
    <scope>FUNCTION</scope>
    <scope>TISSUE SPECIFICITY</scope>
    <scope>DISRUPTION PHENOTYPE</scope>
</reference>